<organism>
    <name type="scientific">Mus musculus</name>
    <name type="common">Mouse</name>
    <dbReference type="NCBI Taxonomy" id="10090"/>
    <lineage>
        <taxon>Eukaryota</taxon>
        <taxon>Metazoa</taxon>
        <taxon>Chordata</taxon>
        <taxon>Craniata</taxon>
        <taxon>Vertebrata</taxon>
        <taxon>Euteleostomi</taxon>
        <taxon>Mammalia</taxon>
        <taxon>Eutheria</taxon>
        <taxon>Euarchontoglires</taxon>
        <taxon>Glires</taxon>
        <taxon>Rodentia</taxon>
        <taxon>Myomorpha</taxon>
        <taxon>Muroidea</taxon>
        <taxon>Muridae</taxon>
        <taxon>Murinae</taxon>
        <taxon>Mus</taxon>
        <taxon>Mus</taxon>
    </lineage>
</organism>
<feature type="signal peptide" evidence="2">
    <location>
        <begin position="1"/>
        <end position="31"/>
    </location>
</feature>
<feature type="chain" id="PRO_0000312419" description="Leucine-rich repeat-containing protein 38">
    <location>
        <begin position="32"/>
        <end position="298"/>
    </location>
</feature>
<feature type="topological domain" description="Extracellular" evidence="2">
    <location>
        <begin position="32"/>
        <end position="251"/>
    </location>
</feature>
<feature type="transmembrane region" description="Helical" evidence="2">
    <location>
        <begin position="252"/>
        <end position="272"/>
    </location>
</feature>
<feature type="topological domain" description="Cytoplasmic" evidence="2">
    <location>
        <begin position="273"/>
        <end position="298"/>
    </location>
</feature>
<feature type="domain" description="LRRNT">
    <location>
        <begin position="32"/>
        <end position="60"/>
    </location>
</feature>
<feature type="repeat" description="LRR 1">
    <location>
        <begin position="61"/>
        <end position="82"/>
    </location>
</feature>
<feature type="repeat" description="LRR 2">
    <location>
        <begin position="85"/>
        <end position="106"/>
    </location>
</feature>
<feature type="repeat" description="LRR 3">
    <location>
        <begin position="109"/>
        <end position="130"/>
    </location>
</feature>
<feature type="repeat" description="LRR 4">
    <location>
        <begin position="133"/>
        <end position="154"/>
    </location>
</feature>
<feature type="repeat" description="LRR 5">
    <location>
        <begin position="157"/>
        <end position="177"/>
    </location>
</feature>
<feature type="domain" description="LRRCT">
    <location>
        <begin position="190"/>
        <end position="245"/>
    </location>
</feature>
<feature type="glycosylation site" description="N-linked (GlcNAc...) asparagine" evidence="2">
    <location>
        <position position="119"/>
    </location>
</feature>
<feature type="disulfide bond" evidence="2">
    <location>
        <begin position="32"/>
        <end position="38"/>
    </location>
</feature>
<feature type="disulfide bond" evidence="2">
    <location>
        <begin position="36"/>
        <end position="46"/>
    </location>
</feature>
<feature type="disulfide bond" evidence="2">
    <location>
        <begin position="194"/>
        <end position="221"/>
    </location>
</feature>
<feature type="disulfide bond" evidence="2">
    <location>
        <begin position="196"/>
        <end position="243"/>
    </location>
</feature>
<proteinExistence type="evidence at transcript level"/>
<accession>A2VDH3</accession>
<accession>A2A8J4</accession>
<accession>Q3TVH8</accession>
<accession>Q8BR15</accession>
<name>LRC38_MOUSE</name>
<keyword id="KW-1003">Cell membrane</keyword>
<keyword id="KW-1015">Disulfide bond</keyword>
<keyword id="KW-0325">Glycoprotein</keyword>
<keyword id="KW-0407">Ion channel</keyword>
<keyword id="KW-0406">Ion transport</keyword>
<keyword id="KW-0433">Leucine-rich repeat</keyword>
<keyword id="KW-0472">Membrane</keyword>
<keyword id="KW-1185">Reference proteome</keyword>
<keyword id="KW-0677">Repeat</keyword>
<keyword id="KW-0732">Signal</keyword>
<keyword id="KW-0812">Transmembrane</keyword>
<keyword id="KW-1133">Transmembrane helix</keyword>
<keyword id="KW-0813">Transport</keyword>
<gene>
    <name type="primary">Lrrc38</name>
</gene>
<sequence>MSLCVAPRHPTGAAAALGLGSLLVLLGPGRACPAGCACTDPHTVDCRDRGLPSVPDPFPLDVRKLLVAGNRIQQIPEDFFIFHGDLVYLDFRNNSLRSLEEGTFSGSGKLAFLDLSYNNLTQLGAGAFRSAGRLVKLSLANNHLAGVHEAAFESLESLQVLELNDNNLRSLNVAALDALPALRTVRLDGNPWLCDCDFAHLFSWIQENTSKLPKGLDAIQCSLPMEDRRVALRELSEASFSECKFSLSLTDLFIIIFSGVAVSIAAIISSFFLATVVQCFQRCAPNKDTEDEDDDEDD</sequence>
<reference key="1">
    <citation type="journal article" date="2009" name="PLoS Biol.">
        <title>Lineage-specific biology revealed by a finished genome assembly of the mouse.</title>
        <authorList>
            <person name="Church D.M."/>
            <person name="Goodstadt L."/>
            <person name="Hillier L.W."/>
            <person name="Zody M.C."/>
            <person name="Goldstein S."/>
            <person name="She X."/>
            <person name="Bult C.J."/>
            <person name="Agarwala R."/>
            <person name="Cherry J.L."/>
            <person name="DiCuccio M."/>
            <person name="Hlavina W."/>
            <person name="Kapustin Y."/>
            <person name="Meric P."/>
            <person name="Maglott D."/>
            <person name="Birtle Z."/>
            <person name="Marques A.C."/>
            <person name="Graves T."/>
            <person name="Zhou S."/>
            <person name="Teague B."/>
            <person name="Potamousis K."/>
            <person name="Churas C."/>
            <person name="Place M."/>
            <person name="Herschleb J."/>
            <person name="Runnheim R."/>
            <person name="Forrest D."/>
            <person name="Amos-Landgraf J."/>
            <person name="Schwartz D.C."/>
            <person name="Cheng Z."/>
            <person name="Lindblad-Toh K."/>
            <person name="Eichler E.E."/>
            <person name="Ponting C.P."/>
        </authorList>
    </citation>
    <scope>NUCLEOTIDE SEQUENCE [LARGE SCALE GENOMIC DNA]</scope>
    <source>
        <strain>C57BL/6J</strain>
    </source>
</reference>
<reference key="2">
    <citation type="journal article" date="2004" name="Genome Res.">
        <title>The status, quality, and expansion of the NIH full-length cDNA project: the Mammalian Gene Collection (MGC).</title>
        <authorList>
            <consortium name="The MGC Project Team"/>
        </authorList>
    </citation>
    <scope>NUCLEOTIDE SEQUENCE [LARGE SCALE MRNA]</scope>
</reference>
<reference key="3">
    <citation type="journal article" date="2005" name="Science">
        <title>The transcriptional landscape of the mammalian genome.</title>
        <authorList>
            <person name="Carninci P."/>
            <person name="Kasukawa T."/>
            <person name="Katayama S."/>
            <person name="Gough J."/>
            <person name="Frith M.C."/>
            <person name="Maeda N."/>
            <person name="Oyama R."/>
            <person name="Ravasi T."/>
            <person name="Lenhard B."/>
            <person name="Wells C."/>
            <person name="Kodzius R."/>
            <person name="Shimokawa K."/>
            <person name="Bajic V.B."/>
            <person name="Brenner S.E."/>
            <person name="Batalov S."/>
            <person name="Forrest A.R."/>
            <person name="Zavolan M."/>
            <person name="Davis M.J."/>
            <person name="Wilming L.G."/>
            <person name="Aidinis V."/>
            <person name="Allen J.E."/>
            <person name="Ambesi-Impiombato A."/>
            <person name="Apweiler R."/>
            <person name="Aturaliya R.N."/>
            <person name="Bailey T.L."/>
            <person name="Bansal M."/>
            <person name="Baxter L."/>
            <person name="Beisel K.W."/>
            <person name="Bersano T."/>
            <person name="Bono H."/>
            <person name="Chalk A.M."/>
            <person name="Chiu K.P."/>
            <person name="Choudhary V."/>
            <person name="Christoffels A."/>
            <person name="Clutterbuck D.R."/>
            <person name="Crowe M.L."/>
            <person name="Dalla E."/>
            <person name="Dalrymple B.P."/>
            <person name="de Bono B."/>
            <person name="Della Gatta G."/>
            <person name="di Bernardo D."/>
            <person name="Down T."/>
            <person name="Engstrom P."/>
            <person name="Fagiolini M."/>
            <person name="Faulkner G."/>
            <person name="Fletcher C.F."/>
            <person name="Fukushima T."/>
            <person name="Furuno M."/>
            <person name="Futaki S."/>
            <person name="Gariboldi M."/>
            <person name="Georgii-Hemming P."/>
            <person name="Gingeras T.R."/>
            <person name="Gojobori T."/>
            <person name="Green R.E."/>
            <person name="Gustincich S."/>
            <person name="Harbers M."/>
            <person name="Hayashi Y."/>
            <person name="Hensch T.K."/>
            <person name="Hirokawa N."/>
            <person name="Hill D."/>
            <person name="Huminiecki L."/>
            <person name="Iacono M."/>
            <person name="Ikeo K."/>
            <person name="Iwama A."/>
            <person name="Ishikawa T."/>
            <person name="Jakt M."/>
            <person name="Kanapin A."/>
            <person name="Katoh M."/>
            <person name="Kawasawa Y."/>
            <person name="Kelso J."/>
            <person name="Kitamura H."/>
            <person name="Kitano H."/>
            <person name="Kollias G."/>
            <person name="Krishnan S.P."/>
            <person name="Kruger A."/>
            <person name="Kummerfeld S.K."/>
            <person name="Kurochkin I.V."/>
            <person name="Lareau L.F."/>
            <person name="Lazarevic D."/>
            <person name="Lipovich L."/>
            <person name="Liu J."/>
            <person name="Liuni S."/>
            <person name="McWilliam S."/>
            <person name="Madan Babu M."/>
            <person name="Madera M."/>
            <person name="Marchionni L."/>
            <person name="Matsuda H."/>
            <person name="Matsuzawa S."/>
            <person name="Miki H."/>
            <person name="Mignone F."/>
            <person name="Miyake S."/>
            <person name="Morris K."/>
            <person name="Mottagui-Tabar S."/>
            <person name="Mulder N."/>
            <person name="Nakano N."/>
            <person name="Nakauchi H."/>
            <person name="Ng P."/>
            <person name="Nilsson R."/>
            <person name="Nishiguchi S."/>
            <person name="Nishikawa S."/>
            <person name="Nori F."/>
            <person name="Ohara O."/>
            <person name="Okazaki Y."/>
            <person name="Orlando V."/>
            <person name="Pang K.C."/>
            <person name="Pavan W.J."/>
            <person name="Pavesi G."/>
            <person name="Pesole G."/>
            <person name="Petrovsky N."/>
            <person name="Piazza S."/>
            <person name="Reed J."/>
            <person name="Reid J.F."/>
            <person name="Ring B.Z."/>
            <person name="Ringwald M."/>
            <person name="Rost B."/>
            <person name="Ruan Y."/>
            <person name="Salzberg S.L."/>
            <person name="Sandelin A."/>
            <person name="Schneider C."/>
            <person name="Schoenbach C."/>
            <person name="Sekiguchi K."/>
            <person name="Semple C.A."/>
            <person name="Seno S."/>
            <person name="Sessa L."/>
            <person name="Sheng Y."/>
            <person name="Shibata Y."/>
            <person name="Shimada H."/>
            <person name="Shimada K."/>
            <person name="Silva D."/>
            <person name="Sinclair B."/>
            <person name="Sperling S."/>
            <person name="Stupka E."/>
            <person name="Sugiura K."/>
            <person name="Sultana R."/>
            <person name="Takenaka Y."/>
            <person name="Taki K."/>
            <person name="Tammoja K."/>
            <person name="Tan S.L."/>
            <person name="Tang S."/>
            <person name="Taylor M.S."/>
            <person name="Tegner J."/>
            <person name="Teichmann S.A."/>
            <person name="Ueda H.R."/>
            <person name="van Nimwegen E."/>
            <person name="Verardo R."/>
            <person name="Wei C.L."/>
            <person name="Yagi K."/>
            <person name="Yamanishi H."/>
            <person name="Zabarovsky E."/>
            <person name="Zhu S."/>
            <person name="Zimmer A."/>
            <person name="Hide W."/>
            <person name="Bult C."/>
            <person name="Grimmond S.M."/>
            <person name="Teasdale R.D."/>
            <person name="Liu E.T."/>
            <person name="Brusic V."/>
            <person name="Quackenbush J."/>
            <person name="Wahlestedt C."/>
            <person name="Mattick J.S."/>
            <person name="Hume D.A."/>
            <person name="Kai C."/>
            <person name="Sasaki D."/>
            <person name="Tomaru Y."/>
            <person name="Fukuda S."/>
            <person name="Kanamori-Katayama M."/>
            <person name="Suzuki M."/>
            <person name="Aoki J."/>
            <person name="Arakawa T."/>
            <person name="Iida J."/>
            <person name="Imamura K."/>
            <person name="Itoh M."/>
            <person name="Kato T."/>
            <person name="Kawaji H."/>
            <person name="Kawagashira N."/>
            <person name="Kawashima T."/>
            <person name="Kojima M."/>
            <person name="Kondo S."/>
            <person name="Konno H."/>
            <person name="Nakano K."/>
            <person name="Ninomiya N."/>
            <person name="Nishio T."/>
            <person name="Okada M."/>
            <person name="Plessy C."/>
            <person name="Shibata K."/>
            <person name="Shiraki T."/>
            <person name="Suzuki S."/>
            <person name="Tagami M."/>
            <person name="Waki K."/>
            <person name="Watahiki A."/>
            <person name="Okamura-Oho Y."/>
            <person name="Suzuki H."/>
            <person name="Kawai J."/>
            <person name="Hayashizaki Y."/>
        </authorList>
    </citation>
    <scope>NUCLEOTIDE SEQUENCE [LARGE SCALE MRNA] OF 11-298</scope>
</reference>
<evidence type="ECO:0000250" key="1"/>
<evidence type="ECO:0000255" key="2"/>
<evidence type="ECO:0000305" key="3"/>
<dbReference type="EMBL" id="AL611982">
    <property type="status" value="NOT_ANNOTATED_CDS"/>
    <property type="molecule type" value="Genomic_DNA"/>
</dbReference>
<dbReference type="EMBL" id="BC129963">
    <property type="protein sequence ID" value="AAI29964.1"/>
    <property type="status" value="ALT_INIT"/>
    <property type="molecule type" value="mRNA"/>
</dbReference>
<dbReference type="EMBL" id="AK045936">
    <property type="protein sequence ID" value="BAC32537.1"/>
    <property type="molecule type" value="mRNA"/>
</dbReference>
<dbReference type="EMBL" id="AK160116">
    <property type="protein sequence ID" value="BAE35640.1"/>
    <property type="molecule type" value="mRNA"/>
</dbReference>
<dbReference type="CCDS" id="CCDS51351.1"/>
<dbReference type="RefSeq" id="NP_001156455.1">
    <property type="nucleotide sequence ID" value="NM_001162983.1"/>
</dbReference>
<dbReference type="SMR" id="A2VDH3"/>
<dbReference type="FunCoup" id="A2VDH3">
    <property type="interactions" value="13"/>
</dbReference>
<dbReference type="STRING" id="10090.ENSMUSP00000053597"/>
<dbReference type="GlyCosmos" id="A2VDH3">
    <property type="glycosylation" value="1 site, No reported glycans"/>
</dbReference>
<dbReference type="GlyGen" id="A2VDH3">
    <property type="glycosylation" value="1 site"/>
</dbReference>
<dbReference type="PaxDb" id="10090-ENSMUSP00000053597"/>
<dbReference type="ProteomicsDB" id="290152"/>
<dbReference type="Antibodypedia" id="48140">
    <property type="antibodies" value="68 antibodies from 13 providers"/>
</dbReference>
<dbReference type="Ensembl" id="ENSMUST00000052458.3">
    <property type="protein sequence ID" value="ENSMUSP00000053597.3"/>
    <property type="gene ID" value="ENSMUSG00000028584.4"/>
</dbReference>
<dbReference type="GeneID" id="242735"/>
<dbReference type="KEGG" id="mmu:242735"/>
<dbReference type="UCSC" id="uc008vqb.2">
    <property type="organism name" value="mouse"/>
</dbReference>
<dbReference type="AGR" id="MGI:2442845"/>
<dbReference type="CTD" id="126755"/>
<dbReference type="MGI" id="MGI:2442845">
    <property type="gene designation" value="Lrrc38"/>
</dbReference>
<dbReference type="VEuPathDB" id="HostDB:ENSMUSG00000028584"/>
<dbReference type="eggNOG" id="KOG0619">
    <property type="taxonomic scope" value="Eukaryota"/>
</dbReference>
<dbReference type="GeneTree" id="ENSGT00940000162571"/>
<dbReference type="HOGENOM" id="CLU_000288_18_10_1"/>
<dbReference type="InParanoid" id="A2VDH3"/>
<dbReference type="OMA" id="VNCFQRC"/>
<dbReference type="OrthoDB" id="5954366at2759"/>
<dbReference type="PhylomeDB" id="A2VDH3"/>
<dbReference type="TreeFam" id="TF334689"/>
<dbReference type="BioGRID-ORCS" id="242735">
    <property type="hits" value="1 hit in 76 CRISPR screens"/>
</dbReference>
<dbReference type="PRO" id="PR:A2VDH3"/>
<dbReference type="Proteomes" id="UP000000589">
    <property type="component" value="Chromosome 4"/>
</dbReference>
<dbReference type="RNAct" id="A2VDH3">
    <property type="molecule type" value="protein"/>
</dbReference>
<dbReference type="Bgee" id="ENSMUSG00000028584">
    <property type="expression patterns" value="Expressed in quadriceps femoris and 24 other cell types or tissues"/>
</dbReference>
<dbReference type="GO" id="GO:0008076">
    <property type="term" value="C:voltage-gated potassium channel complex"/>
    <property type="evidence" value="ECO:0007669"/>
    <property type="project" value="Ensembl"/>
</dbReference>
<dbReference type="GO" id="GO:0099104">
    <property type="term" value="F:potassium channel activator activity"/>
    <property type="evidence" value="ECO:0007669"/>
    <property type="project" value="Ensembl"/>
</dbReference>
<dbReference type="GO" id="GO:0044325">
    <property type="term" value="F:transmembrane transporter binding"/>
    <property type="evidence" value="ECO:0007669"/>
    <property type="project" value="Ensembl"/>
</dbReference>
<dbReference type="GO" id="GO:0071805">
    <property type="term" value="P:potassium ion transmembrane transport"/>
    <property type="evidence" value="ECO:0007669"/>
    <property type="project" value="Ensembl"/>
</dbReference>
<dbReference type="FunFam" id="3.80.10.10:FF:000015">
    <property type="entry name" value="Leucine rich repeat containing 38"/>
    <property type="match status" value="1"/>
</dbReference>
<dbReference type="Gene3D" id="3.80.10.10">
    <property type="entry name" value="Ribonuclease Inhibitor"/>
    <property type="match status" value="1"/>
</dbReference>
<dbReference type="InterPro" id="IPR000483">
    <property type="entry name" value="Cys-rich_flank_reg_C"/>
</dbReference>
<dbReference type="InterPro" id="IPR001611">
    <property type="entry name" value="Leu-rich_rpt"/>
</dbReference>
<dbReference type="InterPro" id="IPR003591">
    <property type="entry name" value="Leu-rich_rpt_typical-subtyp"/>
</dbReference>
<dbReference type="InterPro" id="IPR032675">
    <property type="entry name" value="LRR_dom_sf"/>
</dbReference>
<dbReference type="InterPro" id="IPR050541">
    <property type="entry name" value="LRR_TM_domain-containing"/>
</dbReference>
<dbReference type="InterPro" id="IPR000372">
    <property type="entry name" value="LRRNT"/>
</dbReference>
<dbReference type="PANTHER" id="PTHR24369">
    <property type="entry name" value="ANTIGEN BSP, PUTATIVE-RELATED"/>
    <property type="match status" value="1"/>
</dbReference>
<dbReference type="PANTHER" id="PTHR24369:SF210">
    <property type="entry name" value="CHAOPTIN-RELATED"/>
    <property type="match status" value="1"/>
</dbReference>
<dbReference type="Pfam" id="PF13855">
    <property type="entry name" value="LRR_8"/>
    <property type="match status" value="2"/>
</dbReference>
<dbReference type="PRINTS" id="PR00019">
    <property type="entry name" value="LEURICHRPT"/>
</dbReference>
<dbReference type="SMART" id="SM00369">
    <property type="entry name" value="LRR_TYP"/>
    <property type="match status" value="4"/>
</dbReference>
<dbReference type="SMART" id="SM00082">
    <property type="entry name" value="LRRCT"/>
    <property type="match status" value="1"/>
</dbReference>
<dbReference type="SMART" id="SM00013">
    <property type="entry name" value="LRRNT"/>
    <property type="match status" value="1"/>
</dbReference>
<dbReference type="SUPFAM" id="SSF52058">
    <property type="entry name" value="L domain-like"/>
    <property type="match status" value="1"/>
</dbReference>
<comment type="function">
    <text evidence="1">Auxiliary protein of the large-conductance, voltage and calcium-activated potassium channel (BK alpha). Modulates gating properties by producing a marked shift in the BK channel's voltage dependence of activation in the hyperpolarizing direction, and in the absence of calcium (By similarity).</text>
</comment>
<comment type="subunit">
    <text evidence="1">Interacts with KCNMA1.</text>
</comment>
<comment type="subcellular location">
    <subcellularLocation>
        <location evidence="1">Cell membrane</location>
        <topology evidence="1">Single-pass type I membrane protein</topology>
    </subcellularLocation>
</comment>
<comment type="domain">
    <text evidence="1">The transmembrane domain is necessary for interaction with KCNMA1.</text>
</comment>
<comment type="sequence caution" evidence="3">
    <conflict type="erroneous initiation">
        <sequence resource="EMBL-CDS" id="AAI29964"/>
    </conflict>
</comment>
<protein>
    <recommendedName>
        <fullName>Leucine-rich repeat-containing protein 38</fullName>
    </recommendedName>
    <alternativeName>
        <fullName>BK channel auxiliary gamma subunit LRRC38</fullName>
    </alternativeName>
</protein>